<sequence length="446" mass="48022">MHTLLAFIFAILILVSLHEFGHYIVARLCGVKVVRFSVGFGKPFFTRKRGDTEWCLAPIPLGGYVKMVDTREGEVSEADLPYAFDKQHPAKRIAIVAAGPLTNLALAVLLYGLSFSFGVTELRPYVGTVEPDTIAARAGFQSGDKIQSVNGTPVADWGSAQTEIVLNLEAGKVAVGVQTASGAQTVRTIDAAGTPEAGKIAKNQGYIGLMPFKITTVAGGVEKGSPAEKAGLKPGDRLTAADGKPIASWQEWANLTRQSPGKKITLTYERAGQTHTADIRPDTVEQPDHTLIGRVGLRPQPDRAWDAQIRRSYRPSVVRAFGMGWEKTVSHSWTTLKFFGKLISGNASVSHISGPLTIADIAGQSAELGLQSYLEFLALVSISLGVLNLLPVPVLDGGHLVFYTAEWIRGKPLGERVQNIGLRFGLALMMLMMAVAFFNDVTRLLG</sequence>
<keyword id="KW-0997">Cell inner membrane</keyword>
<keyword id="KW-1003">Cell membrane</keyword>
<keyword id="KW-0378">Hydrolase</keyword>
<keyword id="KW-0472">Membrane</keyword>
<keyword id="KW-0479">Metal-binding</keyword>
<keyword id="KW-0482">Metalloprotease</keyword>
<keyword id="KW-0645">Protease</keyword>
<keyword id="KW-0812">Transmembrane</keyword>
<keyword id="KW-1133">Transmembrane helix</keyword>
<keyword id="KW-0862">Zinc</keyword>
<name>Y084_NEIMA</name>
<evidence type="ECO:0000250" key="1"/>
<evidence type="ECO:0000255" key="2"/>
<evidence type="ECO:0000255" key="3">
    <source>
        <dbReference type="PROSITE-ProRule" id="PRU00143"/>
    </source>
</evidence>
<evidence type="ECO:0000255" key="4">
    <source>
        <dbReference type="PROSITE-ProRule" id="PRU10095"/>
    </source>
</evidence>
<evidence type="ECO:0000305" key="5"/>
<proteinExistence type="inferred from homology"/>
<comment type="cofactor">
    <cofactor evidence="5">
        <name>Zn(2+)</name>
        <dbReference type="ChEBI" id="CHEBI:29105"/>
    </cofactor>
</comment>
<comment type="subcellular location">
    <subcellularLocation>
        <location evidence="1">Cell inner membrane</location>
        <topology evidence="1">Multi-pass membrane protein</topology>
    </subcellularLocation>
</comment>
<comment type="similarity">
    <text evidence="5">Belongs to the peptidase M50B family.</text>
</comment>
<accession>Q9JX32</accession>
<accession>A1INU6</accession>
<protein>
    <recommendedName>
        <fullName>Putative zinc metalloprotease NMA0084</fullName>
        <ecNumber>3.4.24.-</ecNumber>
    </recommendedName>
</protein>
<gene>
    <name type="ordered locus">NMA0084</name>
</gene>
<reference key="1">
    <citation type="journal article" date="2000" name="Nature">
        <title>Complete DNA sequence of a serogroup A strain of Neisseria meningitidis Z2491.</title>
        <authorList>
            <person name="Parkhill J."/>
            <person name="Achtman M."/>
            <person name="James K.D."/>
            <person name="Bentley S.D."/>
            <person name="Churcher C.M."/>
            <person name="Klee S.R."/>
            <person name="Morelli G."/>
            <person name="Basham D."/>
            <person name="Brown D."/>
            <person name="Chillingworth T."/>
            <person name="Davies R.M."/>
            <person name="Davis P."/>
            <person name="Devlin K."/>
            <person name="Feltwell T."/>
            <person name="Hamlin N."/>
            <person name="Holroyd S."/>
            <person name="Jagels K."/>
            <person name="Leather S."/>
            <person name="Moule S."/>
            <person name="Mungall K.L."/>
            <person name="Quail M.A."/>
            <person name="Rajandream M.A."/>
            <person name="Rutherford K.M."/>
            <person name="Simmonds M."/>
            <person name="Skelton J."/>
            <person name="Whitehead S."/>
            <person name="Spratt B.G."/>
            <person name="Barrell B.G."/>
        </authorList>
    </citation>
    <scope>NUCLEOTIDE SEQUENCE [LARGE SCALE GENOMIC DNA]</scope>
    <source>
        <strain>DSM 15465 / Z2491</strain>
    </source>
</reference>
<dbReference type="EC" id="3.4.24.-"/>
<dbReference type="EMBL" id="AL157959">
    <property type="protein sequence ID" value="CAM07403.1"/>
    <property type="molecule type" value="Genomic_DNA"/>
</dbReference>
<dbReference type="PIR" id="C82000">
    <property type="entry name" value="C82000"/>
</dbReference>
<dbReference type="SMR" id="Q9JX32"/>
<dbReference type="EnsemblBacteria" id="CAM07403">
    <property type="protein sequence ID" value="CAM07403"/>
    <property type="gene ID" value="NMA0084"/>
</dbReference>
<dbReference type="KEGG" id="nma:NMA0084"/>
<dbReference type="HOGENOM" id="CLU_025778_0_2_4"/>
<dbReference type="Proteomes" id="UP000000626">
    <property type="component" value="Chromosome"/>
</dbReference>
<dbReference type="GO" id="GO:0005886">
    <property type="term" value="C:plasma membrane"/>
    <property type="evidence" value="ECO:0007669"/>
    <property type="project" value="UniProtKB-SubCell"/>
</dbReference>
<dbReference type="GO" id="GO:0046872">
    <property type="term" value="F:metal ion binding"/>
    <property type="evidence" value="ECO:0007669"/>
    <property type="project" value="UniProtKB-KW"/>
</dbReference>
<dbReference type="GO" id="GO:0004222">
    <property type="term" value="F:metalloendopeptidase activity"/>
    <property type="evidence" value="ECO:0007669"/>
    <property type="project" value="InterPro"/>
</dbReference>
<dbReference type="GO" id="GO:0006508">
    <property type="term" value="P:proteolysis"/>
    <property type="evidence" value="ECO:0007669"/>
    <property type="project" value="UniProtKB-KW"/>
</dbReference>
<dbReference type="CDD" id="cd23082">
    <property type="entry name" value="cpPDZ1_EcRseP-like"/>
    <property type="match status" value="1"/>
</dbReference>
<dbReference type="CDD" id="cd23081">
    <property type="entry name" value="cpPDZ_EcRseP-like"/>
    <property type="match status" value="1"/>
</dbReference>
<dbReference type="CDD" id="cd06163">
    <property type="entry name" value="S2P-M50_PDZ_RseP-like"/>
    <property type="match status" value="2"/>
</dbReference>
<dbReference type="Gene3D" id="2.30.42.10">
    <property type="match status" value="2"/>
</dbReference>
<dbReference type="InterPro" id="IPR001478">
    <property type="entry name" value="PDZ"/>
</dbReference>
<dbReference type="InterPro" id="IPR041489">
    <property type="entry name" value="PDZ_6"/>
</dbReference>
<dbReference type="InterPro" id="IPR036034">
    <property type="entry name" value="PDZ_sf"/>
</dbReference>
<dbReference type="InterPro" id="IPR004387">
    <property type="entry name" value="Pept_M50_Zn"/>
</dbReference>
<dbReference type="InterPro" id="IPR008915">
    <property type="entry name" value="Peptidase_M50"/>
</dbReference>
<dbReference type="NCBIfam" id="TIGR00054">
    <property type="entry name" value="RIP metalloprotease RseP"/>
    <property type="match status" value="1"/>
</dbReference>
<dbReference type="PANTHER" id="PTHR42837:SF2">
    <property type="entry name" value="MEMBRANE METALLOPROTEASE ARASP2, CHLOROPLASTIC-RELATED"/>
    <property type="match status" value="1"/>
</dbReference>
<dbReference type="PANTHER" id="PTHR42837">
    <property type="entry name" value="REGULATOR OF SIGMA-E PROTEASE RSEP"/>
    <property type="match status" value="1"/>
</dbReference>
<dbReference type="Pfam" id="PF17820">
    <property type="entry name" value="PDZ_6"/>
    <property type="match status" value="2"/>
</dbReference>
<dbReference type="Pfam" id="PF02163">
    <property type="entry name" value="Peptidase_M50"/>
    <property type="match status" value="1"/>
</dbReference>
<dbReference type="SMART" id="SM00228">
    <property type="entry name" value="PDZ"/>
    <property type="match status" value="2"/>
</dbReference>
<dbReference type="SUPFAM" id="SSF50156">
    <property type="entry name" value="PDZ domain-like"/>
    <property type="match status" value="2"/>
</dbReference>
<dbReference type="PROSITE" id="PS50106">
    <property type="entry name" value="PDZ"/>
    <property type="match status" value="1"/>
</dbReference>
<dbReference type="PROSITE" id="PS00142">
    <property type="entry name" value="ZINC_PROTEASE"/>
    <property type="match status" value="1"/>
</dbReference>
<organism>
    <name type="scientific">Neisseria meningitidis serogroup A / serotype 4A (strain DSM 15465 / Z2491)</name>
    <dbReference type="NCBI Taxonomy" id="122587"/>
    <lineage>
        <taxon>Bacteria</taxon>
        <taxon>Pseudomonadati</taxon>
        <taxon>Pseudomonadota</taxon>
        <taxon>Betaproteobacteria</taxon>
        <taxon>Neisseriales</taxon>
        <taxon>Neisseriaceae</taxon>
        <taxon>Neisseria</taxon>
    </lineage>
</organism>
<feature type="chain" id="PRO_0000088450" description="Putative zinc metalloprotease NMA0084">
    <location>
        <begin position="1"/>
        <end position="446"/>
    </location>
</feature>
<feature type="transmembrane region" description="Helical" evidence="2">
    <location>
        <begin position="93"/>
        <end position="115"/>
    </location>
</feature>
<feature type="transmembrane region" description="Helical" evidence="2">
    <location>
        <begin position="376"/>
        <end position="398"/>
    </location>
</feature>
<feature type="transmembrane region" description="Helical" evidence="2">
    <location>
        <begin position="419"/>
        <end position="438"/>
    </location>
</feature>
<feature type="domain" description="PDZ" evidence="3">
    <location>
        <begin position="100"/>
        <end position="181"/>
    </location>
</feature>
<feature type="active site" evidence="4">
    <location>
        <position position="19"/>
    </location>
</feature>
<feature type="binding site" evidence="4">
    <location>
        <position position="18"/>
    </location>
    <ligand>
        <name>Zn(2+)</name>
        <dbReference type="ChEBI" id="CHEBI:29105"/>
        <note>catalytic</note>
    </ligand>
</feature>
<feature type="binding site" evidence="4">
    <location>
        <position position="22"/>
    </location>
    <ligand>
        <name>Zn(2+)</name>
        <dbReference type="ChEBI" id="CHEBI:29105"/>
        <note>catalytic</note>
    </ligand>
</feature>